<organism>
    <name type="scientific">Ruminiclostridium cellulolyticum (strain ATCC 35319 / DSM 5812 / JCM 6584 / H10)</name>
    <name type="common">Clostridium cellulolyticum</name>
    <dbReference type="NCBI Taxonomy" id="394503"/>
    <lineage>
        <taxon>Bacteria</taxon>
        <taxon>Bacillati</taxon>
        <taxon>Bacillota</taxon>
        <taxon>Clostridia</taxon>
        <taxon>Eubacteriales</taxon>
        <taxon>Oscillospiraceae</taxon>
        <taxon>Ruminiclostridium</taxon>
    </lineage>
</organism>
<feature type="chain" id="PRO_1000118045" description="Elongation factor 4">
    <location>
        <begin position="1"/>
        <end position="602"/>
    </location>
</feature>
<feature type="domain" description="tr-type G">
    <location>
        <begin position="7"/>
        <end position="189"/>
    </location>
</feature>
<feature type="binding site" evidence="1">
    <location>
        <begin position="19"/>
        <end position="24"/>
    </location>
    <ligand>
        <name>GTP</name>
        <dbReference type="ChEBI" id="CHEBI:37565"/>
    </ligand>
</feature>
<feature type="binding site" evidence="1">
    <location>
        <begin position="136"/>
        <end position="139"/>
    </location>
    <ligand>
        <name>GTP</name>
        <dbReference type="ChEBI" id="CHEBI:37565"/>
    </ligand>
</feature>
<evidence type="ECO:0000255" key="1">
    <source>
        <dbReference type="HAMAP-Rule" id="MF_00071"/>
    </source>
</evidence>
<sequence length="602" mass="67660">MPSERQKYIRNFCIIAHIDHGKSTLADRLLEKTGVLTSREMQEQVLDNMELERERGITIKAQAVRMVYKASDGHEYIYNLIDTPGHVDFNYEVSRSLAACEGAILVVDAAQGIEAQTLANVYLALEHNLEIMPVINKIDLPSAQPEVVKKEIEDVIGLDASQAPMISAKNGLNIEEVLEKIVDMIPCPEADEKAPLRALIFDSFYDSYKGVIVYIRVKEGTLKTGDTIRLMYTKKEFLVTELGYLKPGGLSPADELKAGDVGYIAASIKNVRDTRVGDTITLVENPAKEPLPGYKKVNSMVFCGIYPADGSKYGDLRDALDRLQLNDAALTFEPESSVALGFGFRCGFLGLLHMEIIQERLEREYNFDLVTTAPSVIYRVTTTDGDVIEIDNPTNLPPVTEIDSMEEPMVKATIMVPTEYVGNIMDLSQERRGIYKDMSYIDEGRAMLTYEMPLNEIIYDFFDALKSRTKGYASFDYELVGYKESDLVKLDIMLNGEIVDALSFIVHREKSVARGRRMAEKLKESIPRQMFEIPIQACIGGKIIARETVKAFRKDVLSKCYGGDISRKRKLLEKQKEGKKRMRQVGSVEVPQEAFMSVLKLD</sequence>
<accession>B8I3E6</accession>
<name>LEPA_RUMCH</name>
<protein>
    <recommendedName>
        <fullName evidence="1">Elongation factor 4</fullName>
        <shortName evidence="1">EF-4</shortName>
        <ecNumber evidence="1">3.6.5.n1</ecNumber>
    </recommendedName>
    <alternativeName>
        <fullName evidence="1">Ribosomal back-translocase LepA</fullName>
    </alternativeName>
</protein>
<dbReference type="EC" id="3.6.5.n1" evidence="1"/>
<dbReference type="EMBL" id="CP001348">
    <property type="protein sequence ID" value="ACL76289.1"/>
    <property type="molecule type" value="Genomic_DNA"/>
</dbReference>
<dbReference type="RefSeq" id="WP_015925393.1">
    <property type="nucleotide sequence ID" value="NC_011898.1"/>
</dbReference>
<dbReference type="SMR" id="B8I3E6"/>
<dbReference type="STRING" id="394503.Ccel_1941"/>
<dbReference type="KEGG" id="cce:Ccel_1941"/>
<dbReference type="eggNOG" id="COG0481">
    <property type="taxonomic scope" value="Bacteria"/>
</dbReference>
<dbReference type="HOGENOM" id="CLU_009995_3_3_9"/>
<dbReference type="OrthoDB" id="9801591at2"/>
<dbReference type="Proteomes" id="UP000001349">
    <property type="component" value="Chromosome"/>
</dbReference>
<dbReference type="GO" id="GO:0005886">
    <property type="term" value="C:plasma membrane"/>
    <property type="evidence" value="ECO:0007669"/>
    <property type="project" value="UniProtKB-SubCell"/>
</dbReference>
<dbReference type="GO" id="GO:0005525">
    <property type="term" value="F:GTP binding"/>
    <property type="evidence" value="ECO:0007669"/>
    <property type="project" value="UniProtKB-UniRule"/>
</dbReference>
<dbReference type="GO" id="GO:0003924">
    <property type="term" value="F:GTPase activity"/>
    <property type="evidence" value="ECO:0007669"/>
    <property type="project" value="UniProtKB-UniRule"/>
</dbReference>
<dbReference type="GO" id="GO:0043022">
    <property type="term" value="F:ribosome binding"/>
    <property type="evidence" value="ECO:0007669"/>
    <property type="project" value="UniProtKB-UniRule"/>
</dbReference>
<dbReference type="GO" id="GO:0003746">
    <property type="term" value="F:translation elongation factor activity"/>
    <property type="evidence" value="ECO:0007669"/>
    <property type="project" value="UniProtKB-UniRule"/>
</dbReference>
<dbReference type="GO" id="GO:0045727">
    <property type="term" value="P:positive regulation of translation"/>
    <property type="evidence" value="ECO:0007669"/>
    <property type="project" value="UniProtKB-UniRule"/>
</dbReference>
<dbReference type="CDD" id="cd03699">
    <property type="entry name" value="EF4_II"/>
    <property type="match status" value="1"/>
</dbReference>
<dbReference type="CDD" id="cd16260">
    <property type="entry name" value="EF4_III"/>
    <property type="match status" value="1"/>
</dbReference>
<dbReference type="CDD" id="cd01890">
    <property type="entry name" value="LepA"/>
    <property type="match status" value="1"/>
</dbReference>
<dbReference type="CDD" id="cd03709">
    <property type="entry name" value="lepA_C"/>
    <property type="match status" value="1"/>
</dbReference>
<dbReference type="FunFam" id="3.40.50.300:FF:000078">
    <property type="entry name" value="Elongation factor 4"/>
    <property type="match status" value="1"/>
</dbReference>
<dbReference type="FunFam" id="2.40.30.10:FF:000015">
    <property type="entry name" value="Translation factor GUF1, mitochondrial"/>
    <property type="match status" value="1"/>
</dbReference>
<dbReference type="FunFam" id="3.30.70.240:FF:000007">
    <property type="entry name" value="Translation factor GUF1, mitochondrial"/>
    <property type="match status" value="1"/>
</dbReference>
<dbReference type="FunFam" id="3.30.70.2570:FF:000001">
    <property type="entry name" value="Translation factor GUF1, mitochondrial"/>
    <property type="match status" value="1"/>
</dbReference>
<dbReference type="FunFam" id="3.30.70.870:FF:000004">
    <property type="entry name" value="Translation factor GUF1, mitochondrial"/>
    <property type="match status" value="1"/>
</dbReference>
<dbReference type="Gene3D" id="3.30.70.240">
    <property type="match status" value="1"/>
</dbReference>
<dbReference type="Gene3D" id="3.30.70.2570">
    <property type="entry name" value="Elongation factor 4, C-terminal domain"/>
    <property type="match status" value="1"/>
</dbReference>
<dbReference type="Gene3D" id="3.30.70.870">
    <property type="entry name" value="Elongation Factor G (Translational Gtpase), domain 3"/>
    <property type="match status" value="1"/>
</dbReference>
<dbReference type="Gene3D" id="3.40.50.300">
    <property type="entry name" value="P-loop containing nucleotide triphosphate hydrolases"/>
    <property type="match status" value="1"/>
</dbReference>
<dbReference type="Gene3D" id="2.40.30.10">
    <property type="entry name" value="Translation factors"/>
    <property type="match status" value="1"/>
</dbReference>
<dbReference type="HAMAP" id="MF_00071">
    <property type="entry name" value="LepA"/>
    <property type="match status" value="1"/>
</dbReference>
<dbReference type="InterPro" id="IPR006297">
    <property type="entry name" value="EF-4"/>
</dbReference>
<dbReference type="InterPro" id="IPR035647">
    <property type="entry name" value="EFG_III/V"/>
</dbReference>
<dbReference type="InterPro" id="IPR000640">
    <property type="entry name" value="EFG_V-like"/>
</dbReference>
<dbReference type="InterPro" id="IPR004161">
    <property type="entry name" value="EFTu-like_2"/>
</dbReference>
<dbReference type="InterPro" id="IPR031157">
    <property type="entry name" value="G_TR_CS"/>
</dbReference>
<dbReference type="InterPro" id="IPR038363">
    <property type="entry name" value="LepA_C_sf"/>
</dbReference>
<dbReference type="InterPro" id="IPR013842">
    <property type="entry name" value="LepA_CTD"/>
</dbReference>
<dbReference type="InterPro" id="IPR035654">
    <property type="entry name" value="LepA_IV"/>
</dbReference>
<dbReference type="InterPro" id="IPR027417">
    <property type="entry name" value="P-loop_NTPase"/>
</dbReference>
<dbReference type="InterPro" id="IPR005225">
    <property type="entry name" value="Small_GTP-bd"/>
</dbReference>
<dbReference type="InterPro" id="IPR000795">
    <property type="entry name" value="T_Tr_GTP-bd_dom"/>
</dbReference>
<dbReference type="InterPro" id="IPR009000">
    <property type="entry name" value="Transl_B-barrel_sf"/>
</dbReference>
<dbReference type="NCBIfam" id="TIGR01393">
    <property type="entry name" value="lepA"/>
    <property type="match status" value="1"/>
</dbReference>
<dbReference type="NCBIfam" id="TIGR00231">
    <property type="entry name" value="small_GTP"/>
    <property type="match status" value="1"/>
</dbReference>
<dbReference type="PANTHER" id="PTHR43512:SF4">
    <property type="entry name" value="TRANSLATION FACTOR GUF1 HOMOLOG, CHLOROPLASTIC"/>
    <property type="match status" value="1"/>
</dbReference>
<dbReference type="PANTHER" id="PTHR43512">
    <property type="entry name" value="TRANSLATION FACTOR GUF1-RELATED"/>
    <property type="match status" value="1"/>
</dbReference>
<dbReference type="Pfam" id="PF00679">
    <property type="entry name" value="EFG_C"/>
    <property type="match status" value="1"/>
</dbReference>
<dbReference type="Pfam" id="PF00009">
    <property type="entry name" value="GTP_EFTU"/>
    <property type="match status" value="1"/>
</dbReference>
<dbReference type="Pfam" id="PF03144">
    <property type="entry name" value="GTP_EFTU_D2"/>
    <property type="match status" value="1"/>
</dbReference>
<dbReference type="Pfam" id="PF06421">
    <property type="entry name" value="LepA_C"/>
    <property type="match status" value="1"/>
</dbReference>
<dbReference type="PRINTS" id="PR00315">
    <property type="entry name" value="ELONGATNFCT"/>
</dbReference>
<dbReference type="SMART" id="SM00838">
    <property type="entry name" value="EFG_C"/>
    <property type="match status" value="1"/>
</dbReference>
<dbReference type="SUPFAM" id="SSF54980">
    <property type="entry name" value="EF-G C-terminal domain-like"/>
    <property type="match status" value="2"/>
</dbReference>
<dbReference type="SUPFAM" id="SSF52540">
    <property type="entry name" value="P-loop containing nucleoside triphosphate hydrolases"/>
    <property type="match status" value="1"/>
</dbReference>
<dbReference type="SUPFAM" id="SSF50447">
    <property type="entry name" value="Translation proteins"/>
    <property type="match status" value="1"/>
</dbReference>
<dbReference type="PROSITE" id="PS00301">
    <property type="entry name" value="G_TR_1"/>
    <property type="match status" value="1"/>
</dbReference>
<dbReference type="PROSITE" id="PS51722">
    <property type="entry name" value="G_TR_2"/>
    <property type="match status" value="1"/>
</dbReference>
<reference key="1">
    <citation type="submission" date="2009-01" db="EMBL/GenBank/DDBJ databases">
        <title>Complete sequence of Clostridium cellulolyticum H10.</title>
        <authorList>
            <consortium name="US DOE Joint Genome Institute"/>
            <person name="Lucas S."/>
            <person name="Copeland A."/>
            <person name="Lapidus A."/>
            <person name="Glavina del Rio T."/>
            <person name="Dalin E."/>
            <person name="Tice H."/>
            <person name="Bruce D."/>
            <person name="Goodwin L."/>
            <person name="Pitluck S."/>
            <person name="Chertkov O."/>
            <person name="Saunders E."/>
            <person name="Brettin T."/>
            <person name="Detter J.C."/>
            <person name="Han C."/>
            <person name="Larimer F."/>
            <person name="Land M."/>
            <person name="Hauser L."/>
            <person name="Kyrpides N."/>
            <person name="Ivanova N."/>
            <person name="Zhou J."/>
            <person name="Richardson P."/>
        </authorList>
    </citation>
    <scope>NUCLEOTIDE SEQUENCE [LARGE SCALE GENOMIC DNA]</scope>
    <source>
        <strain>ATCC 35319 / DSM 5812 / JCM 6584 / H10</strain>
    </source>
</reference>
<keyword id="KW-1003">Cell membrane</keyword>
<keyword id="KW-0342">GTP-binding</keyword>
<keyword id="KW-0378">Hydrolase</keyword>
<keyword id="KW-0472">Membrane</keyword>
<keyword id="KW-0547">Nucleotide-binding</keyword>
<keyword id="KW-0648">Protein biosynthesis</keyword>
<keyword id="KW-1185">Reference proteome</keyword>
<comment type="function">
    <text evidence="1">Required for accurate and efficient protein synthesis under certain stress conditions. May act as a fidelity factor of the translation reaction, by catalyzing a one-codon backward translocation of tRNAs on improperly translocated ribosomes. Back-translocation proceeds from a post-translocation (POST) complex to a pre-translocation (PRE) complex, thus giving elongation factor G a second chance to translocate the tRNAs correctly. Binds to ribosomes in a GTP-dependent manner.</text>
</comment>
<comment type="catalytic activity">
    <reaction evidence="1">
        <text>GTP + H2O = GDP + phosphate + H(+)</text>
        <dbReference type="Rhea" id="RHEA:19669"/>
        <dbReference type="ChEBI" id="CHEBI:15377"/>
        <dbReference type="ChEBI" id="CHEBI:15378"/>
        <dbReference type="ChEBI" id="CHEBI:37565"/>
        <dbReference type="ChEBI" id="CHEBI:43474"/>
        <dbReference type="ChEBI" id="CHEBI:58189"/>
        <dbReference type="EC" id="3.6.5.n1"/>
    </reaction>
</comment>
<comment type="subcellular location">
    <subcellularLocation>
        <location evidence="1">Cell membrane</location>
        <topology evidence="1">Peripheral membrane protein</topology>
        <orientation evidence="1">Cytoplasmic side</orientation>
    </subcellularLocation>
</comment>
<comment type="similarity">
    <text evidence="1">Belongs to the TRAFAC class translation factor GTPase superfamily. Classic translation factor GTPase family. LepA subfamily.</text>
</comment>
<proteinExistence type="inferred from homology"/>
<gene>
    <name evidence="1" type="primary">lepA</name>
    <name type="ordered locus">Ccel_1941</name>
</gene>